<feature type="chain" id="PRO_1000071402" description="Histidine--tRNA ligase">
    <location>
        <begin position="1"/>
        <end position="419"/>
    </location>
</feature>
<proteinExistence type="inferred from homology"/>
<keyword id="KW-0030">Aminoacyl-tRNA synthetase</keyword>
<keyword id="KW-0067">ATP-binding</keyword>
<keyword id="KW-0963">Cytoplasm</keyword>
<keyword id="KW-0436">Ligase</keyword>
<keyword id="KW-0547">Nucleotide-binding</keyword>
<keyword id="KW-0648">Protein biosynthesis</keyword>
<keyword id="KW-1185">Reference proteome</keyword>
<evidence type="ECO:0000255" key="1">
    <source>
        <dbReference type="HAMAP-Rule" id="MF_00127"/>
    </source>
</evidence>
<gene>
    <name evidence="1" type="primary">hisS</name>
    <name type="ordered locus">Dred_0756</name>
</gene>
<sequence length="419" mass="47286">MLTTRPRGTNDILPGEVEKWQFLEQLTRQVCREYGYGEIRTPIFEHTELFARGVGETTDIVEKEMYTFTDRGDRSITLRPEGTASTVRAYVENKLHALPQPVKLYYTGPMFRYDRPQAGRYRQFHQFGVEVFGSNDPAIDAEVIAMAMDIYHRIGLQNLKLHINSVGCPECRPVLRQRLQEYFKPHLSNLCSNCQGRYERNPLRILDCKSEKCQEIGQSAPTTLDVLCPECNSHFESVKTYLDAVGVSYIIDNRLVRGLDYYTRTAFEIMTQDIGAQSSIGGGGRYNGLIEECGGPATPGIGFALGLERILLTAERQGITFPITRGPQVYIATVGSGIERQAFALLQDLRRQGIAAEKDYLGRSLKAQMKFAGKLDTRFVVILGEEEFDRGVAVVRDMQAGEQQEVSLRELVLFIKART</sequence>
<reference key="1">
    <citation type="submission" date="2007-03" db="EMBL/GenBank/DDBJ databases">
        <title>Complete sequence of Desulfotomaculum reducens MI-1.</title>
        <authorList>
            <consortium name="US DOE Joint Genome Institute"/>
            <person name="Copeland A."/>
            <person name="Lucas S."/>
            <person name="Lapidus A."/>
            <person name="Barry K."/>
            <person name="Detter J.C."/>
            <person name="Glavina del Rio T."/>
            <person name="Hammon N."/>
            <person name="Israni S."/>
            <person name="Dalin E."/>
            <person name="Tice H."/>
            <person name="Pitluck S."/>
            <person name="Sims D."/>
            <person name="Brettin T."/>
            <person name="Bruce D."/>
            <person name="Han C."/>
            <person name="Tapia R."/>
            <person name="Schmutz J."/>
            <person name="Larimer F."/>
            <person name="Land M."/>
            <person name="Hauser L."/>
            <person name="Kyrpides N."/>
            <person name="Kim E."/>
            <person name="Tebo B.M."/>
            <person name="Richardson P."/>
        </authorList>
    </citation>
    <scope>NUCLEOTIDE SEQUENCE [LARGE SCALE GENOMIC DNA]</scope>
    <source>
        <strain>ATCC BAA-1160 / DSM 100696 / MI-1</strain>
    </source>
</reference>
<dbReference type="EC" id="6.1.1.21" evidence="1"/>
<dbReference type="EMBL" id="CP000612">
    <property type="protein sequence ID" value="ABO49294.1"/>
    <property type="molecule type" value="Genomic_DNA"/>
</dbReference>
<dbReference type="RefSeq" id="WP_011877130.1">
    <property type="nucleotide sequence ID" value="NC_009253.1"/>
</dbReference>
<dbReference type="SMR" id="A4J2J1"/>
<dbReference type="STRING" id="349161.Dred_0756"/>
<dbReference type="KEGG" id="drm:Dred_0756"/>
<dbReference type="eggNOG" id="COG0124">
    <property type="taxonomic scope" value="Bacteria"/>
</dbReference>
<dbReference type="HOGENOM" id="CLU_025113_1_1_9"/>
<dbReference type="OrthoDB" id="9800814at2"/>
<dbReference type="Proteomes" id="UP000001556">
    <property type="component" value="Chromosome"/>
</dbReference>
<dbReference type="GO" id="GO:0005737">
    <property type="term" value="C:cytoplasm"/>
    <property type="evidence" value="ECO:0007669"/>
    <property type="project" value="UniProtKB-SubCell"/>
</dbReference>
<dbReference type="GO" id="GO:0005524">
    <property type="term" value="F:ATP binding"/>
    <property type="evidence" value="ECO:0007669"/>
    <property type="project" value="UniProtKB-UniRule"/>
</dbReference>
<dbReference type="GO" id="GO:0140096">
    <property type="term" value="F:catalytic activity, acting on a protein"/>
    <property type="evidence" value="ECO:0007669"/>
    <property type="project" value="UniProtKB-ARBA"/>
</dbReference>
<dbReference type="GO" id="GO:0004821">
    <property type="term" value="F:histidine-tRNA ligase activity"/>
    <property type="evidence" value="ECO:0007669"/>
    <property type="project" value="UniProtKB-UniRule"/>
</dbReference>
<dbReference type="GO" id="GO:0016740">
    <property type="term" value="F:transferase activity"/>
    <property type="evidence" value="ECO:0007669"/>
    <property type="project" value="UniProtKB-ARBA"/>
</dbReference>
<dbReference type="GO" id="GO:0006427">
    <property type="term" value="P:histidyl-tRNA aminoacylation"/>
    <property type="evidence" value="ECO:0007669"/>
    <property type="project" value="UniProtKB-UniRule"/>
</dbReference>
<dbReference type="CDD" id="cd00773">
    <property type="entry name" value="HisRS-like_core"/>
    <property type="match status" value="1"/>
</dbReference>
<dbReference type="CDD" id="cd00859">
    <property type="entry name" value="HisRS_anticodon"/>
    <property type="match status" value="1"/>
</dbReference>
<dbReference type="FunFam" id="3.30.930.10:FF:000005">
    <property type="entry name" value="Histidine--tRNA ligase"/>
    <property type="match status" value="1"/>
</dbReference>
<dbReference type="Gene3D" id="3.40.50.800">
    <property type="entry name" value="Anticodon-binding domain"/>
    <property type="match status" value="1"/>
</dbReference>
<dbReference type="Gene3D" id="3.30.930.10">
    <property type="entry name" value="Bira Bifunctional Protein, Domain 2"/>
    <property type="match status" value="1"/>
</dbReference>
<dbReference type="HAMAP" id="MF_00127">
    <property type="entry name" value="His_tRNA_synth"/>
    <property type="match status" value="1"/>
</dbReference>
<dbReference type="InterPro" id="IPR006195">
    <property type="entry name" value="aa-tRNA-synth_II"/>
</dbReference>
<dbReference type="InterPro" id="IPR045864">
    <property type="entry name" value="aa-tRNA-synth_II/BPL/LPL"/>
</dbReference>
<dbReference type="InterPro" id="IPR004154">
    <property type="entry name" value="Anticodon-bd"/>
</dbReference>
<dbReference type="InterPro" id="IPR036621">
    <property type="entry name" value="Anticodon-bd_dom_sf"/>
</dbReference>
<dbReference type="InterPro" id="IPR015807">
    <property type="entry name" value="His-tRNA-ligase"/>
</dbReference>
<dbReference type="InterPro" id="IPR041715">
    <property type="entry name" value="HisRS-like_core"/>
</dbReference>
<dbReference type="InterPro" id="IPR004516">
    <property type="entry name" value="HisRS/HisZ"/>
</dbReference>
<dbReference type="InterPro" id="IPR033656">
    <property type="entry name" value="HisRS_anticodon"/>
</dbReference>
<dbReference type="NCBIfam" id="TIGR00442">
    <property type="entry name" value="hisS"/>
    <property type="match status" value="1"/>
</dbReference>
<dbReference type="PANTHER" id="PTHR43707:SF1">
    <property type="entry name" value="HISTIDINE--TRNA LIGASE, MITOCHONDRIAL-RELATED"/>
    <property type="match status" value="1"/>
</dbReference>
<dbReference type="PANTHER" id="PTHR43707">
    <property type="entry name" value="HISTIDYL-TRNA SYNTHETASE"/>
    <property type="match status" value="1"/>
</dbReference>
<dbReference type="Pfam" id="PF03129">
    <property type="entry name" value="HGTP_anticodon"/>
    <property type="match status" value="1"/>
</dbReference>
<dbReference type="Pfam" id="PF13393">
    <property type="entry name" value="tRNA-synt_His"/>
    <property type="match status" value="1"/>
</dbReference>
<dbReference type="PIRSF" id="PIRSF001549">
    <property type="entry name" value="His-tRNA_synth"/>
    <property type="match status" value="1"/>
</dbReference>
<dbReference type="SUPFAM" id="SSF52954">
    <property type="entry name" value="Class II aaRS ABD-related"/>
    <property type="match status" value="1"/>
</dbReference>
<dbReference type="SUPFAM" id="SSF55681">
    <property type="entry name" value="Class II aaRS and biotin synthetases"/>
    <property type="match status" value="1"/>
</dbReference>
<dbReference type="PROSITE" id="PS50862">
    <property type="entry name" value="AA_TRNA_LIGASE_II"/>
    <property type="match status" value="1"/>
</dbReference>
<accession>A4J2J1</accession>
<name>SYH_DESRM</name>
<comment type="catalytic activity">
    <reaction evidence="1">
        <text>tRNA(His) + L-histidine + ATP = L-histidyl-tRNA(His) + AMP + diphosphate + H(+)</text>
        <dbReference type="Rhea" id="RHEA:17313"/>
        <dbReference type="Rhea" id="RHEA-COMP:9665"/>
        <dbReference type="Rhea" id="RHEA-COMP:9689"/>
        <dbReference type="ChEBI" id="CHEBI:15378"/>
        <dbReference type="ChEBI" id="CHEBI:30616"/>
        <dbReference type="ChEBI" id="CHEBI:33019"/>
        <dbReference type="ChEBI" id="CHEBI:57595"/>
        <dbReference type="ChEBI" id="CHEBI:78442"/>
        <dbReference type="ChEBI" id="CHEBI:78527"/>
        <dbReference type="ChEBI" id="CHEBI:456215"/>
        <dbReference type="EC" id="6.1.1.21"/>
    </reaction>
</comment>
<comment type="subunit">
    <text evidence="1">Homodimer.</text>
</comment>
<comment type="subcellular location">
    <subcellularLocation>
        <location evidence="1">Cytoplasm</location>
    </subcellularLocation>
</comment>
<comment type="similarity">
    <text evidence="1">Belongs to the class-II aminoacyl-tRNA synthetase family.</text>
</comment>
<organism>
    <name type="scientific">Desulforamulus reducens (strain ATCC BAA-1160 / DSM 100696 / MI-1)</name>
    <name type="common">Desulfotomaculum reducens</name>
    <dbReference type="NCBI Taxonomy" id="349161"/>
    <lineage>
        <taxon>Bacteria</taxon>
        <taxon>Bacillati</taxon>
        <taxon>Bacillota</taxon>
        <taxon>Clostridia</taxon>
        <taxon>Eubacteriales</taxon>
        <taxon>Peptococcaceae</taxon>
        <taxon>Desulforamulus</taxon>
    </lineage>
</organism>
<protein>
    <recommendedName>
        <fullName evidence="1">Histidine--tRNA ligase</fullName>
        <ecNumber evidence="1">6.1.1.21</ecNumber>
    </recommendedName>
    <alternativeName>
        <fullName evidence="1">Histidyl-tRNA synthetase</fullName>
        <shortName evidence="1">HisRS</shortName>
    </alternativeName>
</protein>